<reference key="1">
    <citation type="journal article" date="1999" name="Gene">
        <title>Chromosomal organization and nucleotide sequence of the genes coding for the elongation factors G and Tu of the Apple proliferation phytoplasma.</title>
        <authorList>
            <person name="Berg M."/>
            <person name="Seemueller E."/>
        </authorList>
    </citation>
    <scope>NUCLEOTIDE SEQUENCE [GENOMIC DNA]</scope>
    <source>
        <strain>AT</strain>
    </source>
</reference>
<gene>
    <name type="primary">fusA</name>
    <name type="synonym">fus</name>
</gene>
<feature type="chain" id="PRO_0000091057" description="Elongation factor G">
    <location>
        <begin position="1"/>
        <end position="688"/>
    </location>
</feature>
<feature type="domain" description="tr-type G">
    <location>
        <begin position="8"/>
        <end position="282"/>
    </location>
</feature>
<feature type="binding site" evidence="1">
    <location>
        <begin position="17"/>
        <end position="24"/>
    </location>
    <ligand>
        <name>GTP</name>
        <dbReference type="ChEBI" id="CHEBI:37565"/>
    </ligand>
</feature>
<feature type="binding site" evidence="1">
    <location>
        <begin position="81"/>
        <end position="85"/>
    </location>
    <ligand>
        <name>GTP</name>
        <dbReference type="ChEBI" id="CHEBI:37565"/>
    </ligand>
</feature>
<feature type="binding site" evidence="1">
    <location>
        <begin position="135"/>
        <end position="138"/>
    </location>
    <ligand>
        <name>GTP</name>
        <dbReference type="ChEBI" id="CHEBI:37565"/>
    </ligand>
</feature>
<name>EFG_APPPP</name>
<accession>Q9ZEU4</accession>
<dbReference type="EMBL" id="AJ011104">
    <property type="protein sequence ID" value="CAA09487.1"/>
    <property type="molecule type" value="Genomic_DNA"/>
</dbReference>
<dbReference type="SMR" id="Q9ZEU4"/>
<dbReference type="GO" id="GO:0005737">
    <property type="term" value="C:cytoplasm"/>
    <property type="evidence" value="ECO:0007669"/>
    <property type="project" value="UniProtKB-SubCell"/>
</dbReference>
<dbReference type="GO" id="GO:0005525">
    <property type="term" value="F:GTP binding"/>
    <property type="evidence" value="ECO:0007669"/>
    <property type="project" value="UniProtKB-UniRule"/>
</dbReference>
<dbReference type="GO" id="GO:0003924">
    <property type="term" value="F:GTPase activity"/>
    <property type="evidence" value="ECO:0007669"/>
    <property type="project" value="InterPro"/>
</dbReference>
<dbReference type="GO" id="GO:0003746">
    <property type="term" value="F:translation elongation factor activity"/>
    <property type="evidence" value="ECO:0007669"/>
    <property type="project" value="UniProtKB-UniRule"/>
</dbReference>
<dbReference type="GO" id="GO:0032790">
    <property type="term" value="P:ribosome disassembly"/>
    <property type="evidence" value="ECO:0007669"/>
    <property type="project" value="TreeGrafter"/>
</dbReference>
<dbReference type="CDD" id="cd01886">
    <property type="entry name" value="EF-G"/>
    <property type="match status" value="1"/>
</dbReference>
<dbReference type="CDD" id="cd16262">
    <property type="entry name" value="EFG_III"/>
    <property type="match status" value="1"/>
</dbReference>
<dbReference type="CDD" id="cd01434">
    <property type="entry name" value="EFG_mtEFG1_IV"/>
    <property type="match status" value="1"/>
</dbReference>
<dbReference type="CDD" id="cd03713">
    <property type="entry name" value="EFG_mtEFG_C"/>
    <property type="match status" value="1"/>
</dbReference>
<dbReference type="CDD" id="cd04088">
    <property type="entry name" value="EFG_mtEFG_II"/>
    <property type="match status" value="1"/>
</dbReference>
<dbReference type="FunFam" id="2.40.30.10:FF:000006">
    <property type="entry name" value="Elongation factor G"/>
    <property type="match status" value="1"/>
</dbReference>
<dbReference type="FunFam" id="3.30.230.10:FF:000003">
    <property type="entry name" value="Elongation factor G"/>
    <property type="match status" value="1"/>
</dbReference>
<dbReference type="FunFam" id="3.30.70.240:FF:000001">
    <property type="entry name" value="Elongation factor G"/>
    <property type="match status" value="1"/>
</dbReference>
<dbReference type="FunFam" id="3.30.70.870:FF:000001">
    <property type="entry name" value="Elongation factor G"/>
    <property type="match status" value="1"/>
</dbReference>
<dbReference type="FunFam" id="3.40.50.300:FF:000029">
    <property type="entry name" value="Elongation factor G"/>
    <property type="match status" value="1"/>
</dbReference>
<dbReference type="Gene3D" id="3.30.230.10">
    <property type="match status" value="1"/>
</dbReference>
<dbReference type="Gene3D" id="3.30.70.240">
    <property type="match status" value="1"/>
</dbReference>
<dbReference type="Gene3D" id="3.30.70.870">
    <property type="entry name" value="Elongation Factor G (Translational Gtpase), domain 3"/>
    <property type="match status" value="1"/>
</dbReference>
<dbReference type="Gene3D" id="3.40.50.300">
    <property type="entry name" value="P-loop containing nucleotide triphosphate hydrolases"/>
    <property type="match status" value="1"/>
</dbReference>
<dbReference type="Gene3D" id="2.40.30.10">
    <property type="entry name" value="Translation factors"/>
    <property type="match status" value="1"/>
</dbReference>
<dbReference type="HAMAP" id="MF_00054_B">
    <property type="entry name" value="EF_G_EF_2_B"/>
    <property type="match status" value="1"/>
</dbReference>
<dbReference type="InterPro" id="IPR041095">
    <property type="entry name" value="EFG_II"/>
</dbReference>
<dbReference type="InterPro" id="IPR009022">
    <property type="entry name" value="EFG_III"/>
</dbReference>
<dbReference type="InterPro" id="IPR035647">
    <property type="entry name" value="EFG_III/V"/>
</dbReference>
<dbReference type="InterPro" id="IPR047872">
    <property type="entry name" value="EFG_IV"/>
</dbReference>
<dbReference type="InterPro" id="IPR035649">
    <property type="entry name" value="EFG_V"/>
</dbReference>
<dbReference type="InterPro" id="IPR000640">
    <property type="entry name" value="EFG_V-like"/>
</dbReference>
<dbReference type="InterPro" id="IPR004161">
    <property type="entry name" value="EFTu-like_2"/>
</dbReference>
<dbReference type="InterPro" id="IPR031157">
    <property type="entry name" value="G_TR_CS"/>
</dbReference>
<dbReference type="InterPro" id="IPR027417">
    <property type="entry name" value="P-loop_NTPase"/>
</dbReference>
<dbReference type="InterPro" id="IPR020568">
    <property type="entry name" value="Ribosomal_Su5_D2-typ_SF"/>
</dbReference>
<dbReference type="InterPro" id="IPR014721">
    <property type="entry name" value="Ribsml_uS5_D2-typ_fold_subgr"/>
</dbReference>
<dbReference type="InterPro" id="IPR005225">
    <property type="entry name" value="Small_GTP-bd"/>
</dbReference>
<dbReference type="InterPro" id="IPR000795">
    <property type="entry name" value="T_Tr_GTP-bd_dom"/>
</dbReference>
<dbReference type="InterPro" id="IPR009000">
    <property type="entry name" value="Transl_B-barrel_sf"/>
</dbReference>
<dbReference type="InterPro" id="IPR004540">
    <property type="entry name" value="Transl_elong_EFG/EF2"/>
</dbReference>
<dbReference type="InterPro" id="IPR005517">
    <property type="entry name" value="Transl_elong_EFG/EF2_IV"/>
</dbReference>
<dbReference type="NCBIfam" id="TIGR00484">
    <property type="entry name" value="EF-G"/>
    <property type="match status" value="1"/>
</dbReference>
<dbReference type="NCBIfam" id="NF009381">
    <property type="entry name" value="PRK12740.1-5"/>
    <property type="match status" value="1"/>
</dbReference>
<dbReference type="NCBIfam" id="TIGR00231">
    <property type="entry name" value="small_GTP"/>
    <property type="match status" value="1"/>
</dbReference>
<dbReference type="PANTHER" id="PTHR43261:SF1">
    <property type="entry name" value="RIBOSOME-RELEASING FACTOR 2, MITOCHONDRIAL"/>
    <property type="match status" value="1"/>
</dbReference>
<dbReference type="PANTHER" id="PTHR43261">
    <property type="entry name" value="TRANSLATION ELONGATION FACTOR G-RELATED"/>
    <property type="match status" value="1"/>
</dbReference>
<dbReference type="Pfam" id="PF00679">
    <property type="entry name" value="EFG_C"/>
    <property type="match status" value="1"/>
</dbReference>
<dbReference type="Pfam" id="PF14492">
    <property type="entry name" value="EFG_III"/>
    <property type="match status" value="1"/>
</dbReference>
<dbReference type="Pfam" id="PF03764">
    <property type="entry name" value="EFG_IV"/>
    <property type="match status" value="1"/>
</dbReference>
<dbReference type="Pfam" id="PF00009">
    <property type="entry name" value="GTP_EFTU"/>
    <property type="match status" value="1"/>
</dbReference>
<dbReference type="Pfam" id="PF03144">
    <property type="entry name" value="GTP_EFTU_D2"/>
    <property type="match status" value="1"/>
</dbReference>
<dbReference type="PRINTS" id="PR00315">
    <property type="entry name" value="ELONGATNFCT"/>
</dbReference>
<dbReference type="SMART" id="SM00838">
    <property type="entry name" value="EFG_C"/>
    <property type="match status" value="1"/>
</dbReference>
<dbReference type="SMART" id="SM00889">
    <property type="entry name" value="EFG_IV"/>
    <property type="match status" value="1"/>
</dbReference>
<dbReference type="SUPFAM" id="SSF54980">
    <property type="entry name" value="EF-G C-terminal domain-like"/>
    <property type="match status" value="2"/>
</dbReference>
<dbReference type="SUPFAM" id="SSF52540">
    <property type="entry name" value="P-loop containing nucleoside triphosphate hydrolases"/>
    <property type="match status" value="1"/>
</dbReference>
<dbReference type="SUPFAM" id="SSF54211">
    <property type="entry name" value="Ribosomal protein S5 domain 2-like"/>
    <property type="match status" value="1"/>
</dbReference>
<dbReference type="SUPFAM" id="SSF50447">
    <property type="entry name" value="Translation proteins"/>
    <property type="match status" value="1"/>
</dbReference>
<dbReference type="PROSITE" id="PS00301">
    <property type="entry name" value="G_TR_1"/>
    <property type="match status" value="1"/>
</dbReference>
<dbReference type="PROSITE" id="PS51722">
    <property type="entry name" value="G_TR_2"/>
    <property type="match status" value="1"/>
</dbReference>
<comment type="function">
    <text evidence="1">Catalyzes the GTP-dependent ribosomal translocation step during translation elongation. During this step, the ribosome changes from the pre-translocational (PRE) to the post-translocational (POST) state as the newly formed A-site-bound peptidyl-tRNA and P-site-bound deacylated tRNA move to the P and E sites, respectively. Catalyzes the coordinated movement of the two tRNA molecules, the mRNA and conformational changes in the ribosome (By similarity).</text>
</comment>
<comment type="subcellular location">
    <subcellularLocation>
        <location evidence="1">Cytoplasm</location>
    </subcellularLocation>
</comment>
<comment type="similarity">
    <text evidence="2">Belongs to the TRAFAC class translation factor GTPase superfamily. Classic translation factor GTPase family. EF-G/EF-2 subfamily.</text>
</comment>
<keyword id="KW-0963">Cytoplasm</keyword>
<keyword id="KW-0251">Elongation factor</keyword>
<keyword id="KW-0342">GTP-binding</keyword>
<keyword id="KW-0547">Nucleotide-binding</keyword>
<keyword id="KW-0648">Protein biosynthesis</keyword>
<proteinExistence type="inferred from homology"/>
<evidence type="ECO:0000250" key="1"/>
<evidence type="ECO:0000305" key="2"/>
<protein>
    <recommendedName>
        <fullName>Elongation factor G</fullName>
        <shortName>EF-G</shortName>
    </recommendedName>
</protein>
<organism>
    <name type="scientific">Apple proliferation phytoplasma</name>
    <dbReference type="NCBI Taxonomy" id="37692"/>
    <lineage>
        <taxon>Bacteria</taxon>
        <taxon>Bacillati</taxon>
        <taxon>Mycoplasmatota</taxon>
        <taxon>Mollicutes</taxon>
        <taxon>Acholeplasmatales</taxon>
        <taxon>Acholeplasmataceae</taxon>
        <taxon>Candidatus Phytoplasma</taxon>
        <taxon>16SrX (Apple proliferation group)</taxon>
    </lineage>
</organism>
<sequence>MPRKFPLEKTRNIGIMAHIDAGKTTTTERILFHTGKIHKIGETHDGDSQMDWMKQEQERGITITSAATTAFWKEHRINIIDTPGHVDFTVEVSRSLRVLDGAVAVIDAKAGVEPQTETVWRQATEYKVPRIIFVNKMDKIGASFDYAVKTLYQRLGINASPIQLPIGSENEFKGIVDLLEMTGVEFLGTSDEKFKTIEIPEYMKEFAQNKRIELIEKWHNYDEELMMDYLNGKEITVEKLKNVIRQATLKADFFPVLCGSAFKNKGVKKILDAIIDYLPSPMDVSSIVGCNFENKEIIRKTSDNEPFTALAFKVMTDPYVGKLTFFRVYAGTIKTGSYVTNATKQVKERLGRLLQMHANSREEIKEVYAGDIVAAVGLKNTTPGDTLTSINDDIILESMNFPEPVIEIAIEPKTKADQDKIGIALSKLSEEHPTFKIYTNRETAQTIIAAMGELHLEIILDRLKTEFKVEANVNQPQVAYRETLTKISTTEGKFIRQSGGRGQYGHVIIRFEPNSDKGNEFINKIVGGVIPKEYIPAVKKGLEESLSNGILAGFPLIDVKATLIDGSYHDVDSSEIAFKIAASMALKQTKNEGNLVILEPIMEVEIITPNDYIGNVIGDLTSRRGKLENQDSRENTVIIKALVPLSEMFGYATILRSNTQGRASFIMQFLKYERAPKNIAEEIIKKRN</sequence>